<reference key="1">
    <citation type="submission" date="2008-04" db="EMBL/GenBank/DDBJ databases">
        <title>Complete sequence of chromosome of Methylobacterium populi BJ001.</title>
        <authorList>
            <consortium name="US DOE Joint Genome Institute"/>
            <person name="Copeland A."/>
            <person name="Lucas S."/>
            <person name="Lapidus A."/>
            <person name="Glavina del Rio T."/>
            <person name="Dalin E."/>
            <person name="Tice H."/>
            <person name="Bruce D."/>
            <person name="Goodwin L."/>
            <person name="Pitluck S."/>
            <person name="Chertkov O."/>
            <person name="Brettin T."/>
            <person name="Detter J.C."/>
            <person name="Han C."/>
            <person name="Kuske C.R."/>
            <person name="Schmutz J."/>
            <person name="Larimer F."/>
            <person name="Land M."/>
            <person name="Hauser L."/>
            <person name="Kyrpides N."/>
            <person name="Mikhailova N."/>
            <person name="Marx C."/>
            <person name="Richardson P."/>
        </authorList>
    </citation>
    <scope>NUCLEOTIDE SEQUENCE [LARGE SCALE GENOMIC DNA]</scope>
    <source>
        <strain>ATCC BAA-705 / NCIMB 13946 / BJ001</strain>
    </source>
</reference>
<comment type="function">
    <text evidence="1">May be involved in the transport of PQQ or its precursor to the periplasm.</text>
</comment>
<comment type="pathway">
    <text evidence="1">Cofactor biosynthesis; pyrroloquinoline quinone biosynthesis.</text>
</comment>
<comment type="similarity">
    <text evidence="1">Belongs to the PqqB family.</text>
</comment>
<dbReference type="EMBL" id="CP001029">
    <property type="protein sequence ID" value="ACB79934.1"/>
    <property type="molecule type" value="Genomic_DNA"/>
</dbReference>
<dbReference type="RefSeq" id="WP_012453680.1">
    <property type="nucleotide sequence ID" value="NC_010725.1"/>
</dbReference>
<dbReference type="SMR" id="B1ZIB4"/>
<dbReference type="STRING" id="441620.Mpop_1771"/>
<dbReference type="KEGG" id="mpo:Mpop_1771"/>
<dbReference type="eggNOG" id="COG1235">
    <property type="taxonomic scope" value="Bacteria"/>
</dbReference>
<dbReference type="HOGENOM" id="CLU_061120_0_0_5"/>
<dbReference type="OrthoDB" id="9778305at2"/>
<dbReference type="UniPathway" id="UPA00539"/>
<dbReference type="Proteomes" id="UP000007136">
    <property type="component" value="Chromosome"/>
</dbReference>
<dbReference type="GO" id="GO:0018189">
    <property type="term" value="P:pyrroloquinoline quinone biosynthetic process"/>
    <property type="evidence" value="ECO:0007669"/>
    <property type="project" value="UniProtKB-UniRule"/>
</dbReference>
<dbReference type="CDD" id="cd16274">
    <property type="entry name" value="PQQB-like_MBL-fold"/>
    <property type="match status" value="1"/>
</dbReference>
<dbReference type="Gene3D" id="3.60.15.10">
    <property type="entry name" value="Ribonuclease Z/Hydroxyacylglutathione hydrolase-like"/>
    <property type="match status" value="1"/>
</dbReference>
<dbReference type="HAMAP" id="MF_00653">
    <property type="entry name" value="PQQ_syn_PqqB"/>
    <property type="match status" value="1"/>
</dbReference>
<dbReference type="InterPro" id="IPR001279">
    <property type="entry name" value="Metallo-B-lactamas"/>
</dbReference>
<dbReference type="InterPro" id="IPR011842">
    <property type="entry name" value="PQQ_synth_PqqB"/>
</dbReference>
<dbReference type="InterPro" id="IPR036866">
    <property type="entry name" value="RibonucZ/Hydroxyglut_hydro"/>
</dbReference>
<dbReference type="NCBIfam" id="TIGR02108">
    <property type="entry name" value="PQQ_syn_pqqB"/>
    <property type="match status" value="1"/>
</dbReference>
<dbReference type="PANTHER" id="PTHR42663:SF7">
    <property type="entry name" value="COENZYME PQQ SYNTHESIS PROTEIN B"/>
    <property type="match status" value="1"/>
</dbReference>
<dbReference type="PANTHER" id="PTHR42663">
    <property type="entry name" value="HYDROLASE C777.06C-RELATED-RELATED"/>
    <property type="match status" value="1"/>
</dbReference>
<dbReference type="Pfam" id="PF12706">
    <property type="entry name" value="Lactamase_B_2"/>
    <property type="match status" value="1"/>
</dbReference>
<dbReference type="SUPFAM" id="SSF56281">
    <property type="entry name" value="Metallo-hydrolase/oxidoreductase"/>
    <property type="match status" value="1"/>
</dbReference>
<sequence length="299" mass="31978">MHVVILGSAAGGGVPQWNCRCSICSLAWAGDPRVKARTQSSIAVSPDGERWLLLNASPDIRQQIQANPQMHPREGLRHSPIHAVLLTNGDVDHVAGLLTLREGQPFTLYATPGILASVSDNRVFDVMAADVVKRQTIALDETFEPVPGLSVTLFSVPGKVPLWLEDASMEIGAETETTVGTMIEAGGKRLAYIPGCARVTEDLKARVAGVDALLFDGTVLEDDDMIRAGVGTKTGWRMGHIQINGETGSIASFADVALGRRVLIHINNTNPILIEDSPERAGVEARGWTVAHDGLTLDL</sequence>
<protein>
    <recommendedName>
        <fullName evidence="1">Coenzyme PQQ synthesis protein B</fullName>
    </recommendedName>
    <alternativeName>
        <fullName evidence="1">Pyrroloquinoline quinone biosynthesis protein B</fullName>
    </alternativeName>
</protein>
<accession>B1ZIB4</accession>
<evidence type="ECO:0000255" key="1">
    <source>
        <dbReference type="HAMAP-Rule" id="MF_00653"/>
    </source>
</evidence>
<organism>
    <name type="scientific">Methylorubrum populi (strain ATCC BAA-705 / NCIMB 13946 / BJ001)</name>
    <name type="common">Methylobacterium populi</name>
    <dbReference type="NCBI Taxonomy" id="441620"/>
    <lineage>
        <taxon>Bacteria</taxon>
        <taxon>Pseudomonadati</taxon>
        <taxon>Pseudomonadota</taxon>
        <taxon>Alphaproteobacteria</taxon>
        <taxon>Hyphomicrobiales</taxon>
        <taxon>Methylobacteriaceae</taxon>
        <taxon>Methylorubrum</taxon>
    </lineage>
</organism>
<gene>
    <name evidence="1" type="primary">pqqB</name>
    <name type="ordered locus">Mpop_1771</name>
</gene>
<feature type="chain" id="PRO_1000131164" description="Coenzyme PQQ synthesis protein B">
    <location>
        <begin position="1"/>
        <end position="299"/>
    </location>
</feature>
<keyword id="KW-0884">PQQ biosynthesis</keyword>
<keyword id="KW-0813">Transport</keyword>
<name>PQQB_METPB</name>
<proteinExistence type="inferred from homology"/>